<keyword id="KW-0067">ATP-binding</keyword>
<keyword id="KW-0963">Cytoplasm</keyword>
<keyword id="KW-0210">Decarboxylase</keyword>
<keyword id="KW-0312">Gluconeogenesis</keyword>
<keyword id="KW-0456">Lyase</keyword>
<keyword id="KW-0464">Manganese</keyword>
<keyword id="KW-0479">Metal-binding</keyword>
<keyword id="KW-0547">Nucleotide-binding</keyword>
<keyword id="KW-1185">Reference proteome</keyword>
<evidence type="ECO:0000255" key="1">
    <source>
        <dbReference type="HAMAP-Rule" id="MF_00453"/>
    </source>
</evidence>
<protein>
    <recommendedName>
        <fullName evidence="1">Phosphoenolpyruvate carboxykinase (ATP)</fullName>
        <shortName evidence="1">PCK</shortName>
        <shortName evidence="1">PEP carboxykinase</shortName>
        <shortName evidence="1">PEPCK</shortName>
        <ecNumber evidence="1">4.1.1.49</ecNumber>
    </recommendedName>
</protein>
<organism>
    <name type="scientific">Shewanella baltica (strain OS155 / ATCC BAA-1091)</name>
    <dbReference type="NCBI Taxonomy" id="325240"/>
    <lineage>
        <taxon>Bacteria</taxon>
        <taxon>Pseudomonadati</taxon>
        <taxon>Pseudomonadota</taxon>
        <taxon>Gammaproteobacteria</taxon>
        <taxon>Alteromonadales</taxon>
        <taxon>Shewanellaceae</taxon>
        <taxon>Shewanella</taxon>
    </lineage>
</organism>
<dbReference type="EC" id="4.1.1.49" evidence="1"/>
<dbReference type="EMBL" id="CP000563">
    <property type="protein sequence ID" value="ABN63675.1"/>
    <property type="molecule type" value="Genomic_DNA"/>
</dbReference>
<dbReference type="RefSeq" id="WP_011848178.1">
    <property type="nucleotide sequence ID" value="NC_009052.1"/>
</dbReference>
<dbReference type="SMR" id="A3DAB2"/>
<dbReference type="STRING" id="325240.Sbal_4210"/>
<dbReference type="KEGG" id="sbl:Sbal_4210"/>
<dbReference type="HOGENOM" id="CLU_018247_0_1_6"/>
<dbReference type="OrthoDB" id="9806325at2"/>
<dbReference type="UniPathway" id="UPA00138"/>
<dbReference type="Proteomes" id="UP000001557">
    <property type="component" value="Chromosome"/>
</dbReference>
<dbReference type="GO" id="GO:0005829">
    <property type="term" value="C:cytosol"/>
    <property type="evidence" value="ECO:0007669"/>
    <property type="project" value="TreeGrafter"/>
</dbReference>
<dbReference type="GO" id="GO:0005524">
    <property type="term" value="F:ATP binding"/>
    <property type="evidence" value="ECO:0007669"/>
    <property type="project" value="UniProtKB-UniRule"/>
</dbReference>
<dbReference type="GO" id="GO:0046872">
    <property type="term" value="F:metal ion binding"/>
    <property type="evidence" value="ECO:0007669"/>
    <property type="project" value="UniProtKB-KW"/>
</dbReference>
<dbReference type="GO" id="GO:0004612">
    <property type="term" value="F:phosphoenolpyruvate carboxykinase (ATP) activity"/>
    <property type="evidence" value="ECO:0007669"/>
    <property type="project" value="UniProtKB-UniRule"/>
</dbReference>
<dbReference type="GO" id="GO:0006094">
    <property type="term" value="P:gluconeogenesis"/>
    <property type="evidence" value="ECO:0007669"/>
    <property type="project" value="UniProtKB-UniRule"/>
</dbReference>
<dbReference type="CDD" id="cd00484">
    <property type="entry name" value="PEPCK_ATP"/>
    <property type="match status" value="1"/>
</dbReference>
<dbReference type="FunFam" id="2.170.8.10:FF:000001">
    <property type="entry name" value="Phosphoenolpyruvate carboxykinase (ATP)"/>
    <property type="match status" value="1"/>
</dbReference>
<dbReference type="Gene3D" id="3.90.228.20">
    <property type="match status" value="1"/>
</dbReference>
<dbReference type="Gene3D" id="3.40.449.10">
    <property type="entry name" value="Phosphoenolpyruvate Carboxykinase, domain 1"/>
    <property type="match status" value="1"/>
</dbReference>
<dbReference type="Gene3D" id="2.170.8.10">
    <property type="entry name" value="Phosphoenolpyruvate Carboxykinase, domain 2"/>
    <property type="match status" value="1"/>
</dbReference>
<dbReference type="HAMAP" id="MF_00453">
    <property type="entry name" value="PEPCK_ATP"/>
    <property type="match status" value="1"/>
</dbReference>
<dbReference type="InterPro" id="IPR001272">
    <property type="entry name" value="PEP_carboxykinase_ATP"/>
</dbReference>
<dbReference type="InterPro" id="IPR013035">
    <property type="entry name" value="PEP_carboxykinase_C"/>
</dbReference>
<dbReference type="InterPro" id="IPR008210">
    <property type="entry name" value="PEP_carboxykinase_N"/>
</dbReference>
<dbReference type="InterPro" id="IPR015994">
    <property type="entry name" value="PEPCK_ATP_CS"/>
</dbReference>
<dbReference type="NCBIfam" id="TIGR00224">
    <property type="entry name" value="pckA"/>
    <property type="match status" value="1"/>
</dbReference>
<dbReference type="NCBIfam" id="NF006820">
    <property type="entry name" value="PRK09344.1-2"/>
    <property type="match status" value="1"/>
</dbReference>
<dbReference type="NCBIfam" id="NF006821">
    <property type="entry name" value="PRK09344.1-3"/>
    <property type="match status" value="1"/>
</dbReference>
<dbReference type="NCBIfam" id="NF006823">
    <property type="entry name" value="PRK09344.1-5"/>
    <property type="match status" value="1"/>
</dbReference>
<dbReference type="PANTHER" id="PTHR30031:SF0">
    <property type="entry name" value="PHOSPHOENOLPYRUVATE CARBOXYKINASE (ATP)"/>
    <property type="match status" value="1"/>
</dbReference>
<dbReference type="PANTHER" id="PTHR30031">
    <property type="entry name" value="PHOSPHOENOLPYRUVATE CARBOXYKINASE ATP"/>
    <property type="match status" value="1"/>
</dbReference>
<dbReference type="Pfam" id="PF01293">
    <property type="entry name" value="PEPCK_ATP"/>
    <property type="match status" value="1"/>
</dbReference>
<dbReference type="PIRSF" id="PIRSF006294">
    <property type="entry name" value="PEP_crbxkin"/>
    <property type="match status" value="1"/>
</dbReference>
<dbReference type="SUPFAM" id="SSF68923">
    <property type="entry name" value="PEP carboxykinase N-terminal domain"/>
    <property type="match status" value="1"/>
</dbReference>
<dbReference type="SUPFAM" id="SSF53795">
    <property type="entry name" value="PEP carboxykinase-like"/>
    <property type="match status" value="1"/>
</dbReference>
<dbReference type="PROSITE" id="PS00532">
    <property type="entry name" value="PEPCK_ATP"/>
    <property type="match status" value="1"/>
</dbReference>
<proteinExistence type="inferred from homology"/>
<gene>
    <name evidence="1" type="primary">pckA</name>
    <name type="ordered locus">Sbal_4210</name>
</gene>
<comment type="function">
    <text evidence="1">Involved in the gluconeogenesis. Catalyzes the conversion of oxaloacetate (OAA) to phosphoenolpyruvate (PEP) through direct phosphoryl transfer between the nucleoside triphosphate and OAA.</text>
</comment>
<comment type="catalytic activity">
    <reaction evidence="1">
        <text>oxaloacetate + ATP = phosphoenolpyruvate + ADP + CO2</text>
        <dbReference type="Rhea" id="RHEA:18617"/>
        <dbReference type="ChEBI" id="CHEBI:16452"/>
        <dbReference type="ChEBI" id="CHEBI:16526"/>
        <dbReference type="ChEBI" id="CHEBI:30616"/>
        <dbReference type="ChEBI" id="CHEBI:58702"/>
        <dbReference type="ChEBI" id="CHEBI:456216"/>
        <dbReference type="EC" id="4.1.1.49"/>
    </reaction>
</comment>
<comment type="cofactor">
    <cofactor evidence="1">
        <name>Mn(2+)</name>
        <dbReference type="ChEBI" id="CHEBI:29035"/>
    </cofactor>
    <text evidence="1">Binds 1 Mn(2+) ion per subunit.</text>
</comment>
<comment type="pathway">
    <text evidence="1">Carbohydrate biosynthesis; gluconeogenesis.</text>
</comment>
<comment type="subunit">
    <text evidence="1">Monomer.</text>
</comment>
<comment type="subcellular location">
    <subcellularLocation>
        <location evidence="1">Cytoplasm</location>
    </subcellularLocation>
</comment>
<comment type="similarity">
    <text evidence="1">Belongs to the phosphoenolpyruvate carboxykinase (ATP) family.</text>
</comment>
<feature type="chain" id="PRO_1000026350" description="Phosphoenolpyruvate carboxykinase (ATP)">
    <location>
        <begin position="1"/>
        <end position="513"/>
    </location>
</feature>
<feature type="binding site" evidence="1">
    <location>
        <position position="45"/>
    </location>
    <ligand>
        <name>substrate</name>
    </ligand>
</feature>
<feature type="binding site" evidence="1">
    <location>
        <position position="179"/>
    </location>
    <ligand>
        <name>substrate</name>
    </ligand>
</feature>
<feature type="binding site" evidence="1">
    <location>
        <position position="185"/>
    </location>
    <ligand>
        <name>ATP</name>
        <dbReference type="ChEBI" id="CHEBI:30616"/>
    </ligand>
</feature>
<feature type="binding site" evidence="1">
    <location>
        <position position="185"/>
    </location>
    <ligand>
        <name>Mn(2+)</name>
        <dbReference type="ChEBI" id="CHEBI:29035"/>
    </ligand>
</feature>
<feature type="binding site" evidence="1">
    <location>
        <position position="185"/>
    </location>
    <ligand>
        <name>substrate</name>
    </ligand>
</feature>
<feature type="binding site" evidence="1">
    <location>
        <position position="204"/>
    </location>
    <ligand>
        <name>ATP</name>
        <dbReference type="ChEBI" id="CHEBI:30616"/>
    </ligand>
</feature>
<feature type="binding site" evidence="1">
    <location>
        <position position="204"/>
    </location>
    <ligand>
        <name>Mn(2+)</name>
        <dbReference type="ChEBI" id="CHEBI:29035"/>
    </ligand>
</feature>
<feature type="binding site" evidence="1">
    <location>
        <begin position="220"/>
        <end position="228"/>
    </location>
    <ligand>
        <name>ATP</name>
        <dbReference type="ChEBI" id="CHEBI:30616"/>
    </ligand>
</feature>
<feature type="binding site" evidence="1">
    <location>
        <position position="241"/>
    </location>
    <ligand>
        <name>Mn(2+)</name>
        <dbReference type="ChEBI" id="CHEBI:29035"/>
    </ligand>
</feature>
<feature type="binding site" evidence="1">
    <location>
        <position position="269"/>
    </location>
    <ligand>
        <name>ATP</name>
        <dbReference type="ChEBI" id="CHEBI:30616"/>
    </ligand>
</feature>
<feature type="binding site" evidence="1">
    <location>
        <position position="305"/>
    </location>
    <ligand>
        <name>ATP</name>
        <dbReference type="ChEBI" id="CHEBI:30616"/>
    </ligand>
</feature>
<feature type="binding site" evidence="1">
    <location>
        <position position="305"/>
    </location>
    <ligand>
        <name>substrate</name>
    </ligand>
</feature>
<feature type="binding site" evidence="1">
    <location>
        <position position="431"/>
    </location>
    <ligand>
        <name>ATP</name>
        <dbReference type="ChEBI" id="CHEBI:30616"/>
    </ligand>
</feature>
<sequence>MADGLNRVHFNPSTAQLVEFALLRGEGELTANGALVAKTGARSGRSPGDRFIVREPSSEAEIEWGPVNQAFDPGAFEGLWARVEAYLADKELFVSDLEVGADTEHYQPVRVTTQYAWHQLFARNLFIIPEEFNRKNKPVWQIINAPDFVCDPARDGTNSDATVILNFAERKVLLAGLKYAGEMKKSMFSVQNFLLPAQGVLPMHCSANVGKDGDTTLFFGLSGTGKTTLSADPKRFLIGDDEHGWAPGGVFNIEGGCYAKCIDLSQKNEPVIWDAIRFGTVLENVVMDEHRVPNYKDSSLTENTRAAYPLEHIAQRKEDNCGAEPHAVVFLTCDVSGVLPPVSILTKEQAAYHFLSGYTAKVGSTEIGSTSAIQSTFSTCFGAPFFPRPAGVYAELLMKRIESFGSQVYLVNTGWTGGPHGVGKRFDIPTTRAIVDAIVSGELKDVETVHLDTLNLAVPVAVTGVDSNLLNPINTWGDKALYTEYAQKLAEAFTKNFAKYQVSDAIRNAGPKA</sequence>
<accession>A3DAB2</accession>
<name>PCKA_SHEB5</name>
<reference key="1">
    <citation type="submission" date="2007-02" db="EMBL/GenBank/DDBJ databases">
        <title>Complete sequence of chromosome of Shewanella baltica OS155.</title>
        <authorList>
            <consortium name="US DOE Joint Genome Institute"/>
            <person name="Copeland A."/>
            <person name="Lucas S."/>
            <person name="Lapidus A."/>
            <person name="Barry K."/>
            <person name="Detter J.C."/>
            <person name="Glavina del Rio T."/>
            <person name="Hammon N."/>
            <person name="Israni S."/>
            <person name="Dalin E."/>
            <person name="Tice H."/>
            <person name="Pitluck S."/>
            <person name="Sims D.R."/>
            <person name="Brettin T."/>
            <person name="Bruce D."/>
            <person name="Han C."/>
            <person name="Tapia R."/>
            <person name="Brainard J."/>
            <person name="Schmutz J."/>
            <person name="Larimer F."/>
            <person name="Land M."/>
            <person name="Hauser L."/>
            <person name="Kyrpides N."/>
            <person name="Mikhailova N."/>
            <person name="Brettar I."/>
            <person name="Klappenbach J."/>
            <person name="Konstantinidis K."/>
            <person name="Rodrigues J."/>
            <person name="Tiedje J."/>
            <person name="Richardson P."/>
        </authorList>
    </citation>
    <scope>NUCLEOTIDE SEQUENCE [LARGE SCALE GENOMIC DNA]</scope>
    <source>
        <strain>OS155 / ATCC BAA-1091</strain>
    </source>
</reference>